<evidence type="ECO:0000250" key="1"/>
<evidence type="ECO:0000305" key="2"/>
<sequence length="144" mass="15281">HISANIMQLHHSKHHATYVNNLNVAEQKLAEAVAKGDVTAEIALQPAIKFNGGGHINHSIFWTNLSPNGGGAPTGDLQKAIETDFGSFTKLQEKMSAVSVAVQGSGWGWLGYDKETGRLRIAACANQDPLQATTGLIPLLGIDV</sequence>
<organism>
    <name type="scientific">Petromyzon marinus</name>
    <name type="common">Sea lamprey</name>
    <dbReference type="NCBI Taxonomy" id="7757"/>
    <lineage>
        <taxon>Eukaryota</taxon>
        <taxon>Metazoa</taxon>
        <taxon>Chordata</taxon>
        <taxon>Craniata</taxon>
        <taxon>Vertebrata</taxon>
        <taxon>Cyclostomata</taxon>
        <taxon>Hyperoartia</taxon>
        <taxon>Petromyzontiformes</taxon>
        <taxon>Petromyzontidae</taxon>
        <taxon>Petromyzon</taxon>
    </lineage>
</organism>
<reference key="1">
    <citation type="journal article" date="1992" name="J. Mol. Evol.">
        <title>A comparison of evolutionary rates of the two major kinds of superoxide dismutase.</title>
        <authorList>
            <person name="Smith M.W."/>
            <person name="Doolittle R.F."/>
        </authorList>
    </citation>
    <scope>NUCLEOTIDE SEQUENCE [MRNA]</scope>
</reference>
<proteinExistence type="evidence at transcript level"/>
<name>SODM_PETMA</name>
<protein>
    <recommendedName>
        <fullName>Superoxide dismutase [Mn], mitochondrial</fullName>
        <ecNumber>1.15.1.1</ecNumber>
    </recommendedName>
</protein>
<dbReference type="EC" id="1.15.1.1"/>
<dbReference type="EMBL" id="X64059">
    <property type="protein sequence ID" value="CAA45415.1"/>
    <property type="molecule type" value="mRNA"/>
</dbReference>
<dbReference type="PIR" id="S23660">
    <property type="entry name" value="S23660"/>
</dbReference>
<dbReference type="SMR" id="P28767"/>
<dbReference type="STRING" id="7757.ENSPMAP00000007890"/>
<dbReference type="TreeFam" id="TF105132"/>
<dbReference type="Proteomes" id="UP001318040">
    <property type="component" value="Unplaced"/>
</dbReference>
<dbReference type="GO" id="GO:0005759">
    <property type="term" value="C:mitochondrial matrix"/>
    <property type="evidence" value="ECO:0007669"/>
    <property type="project" value="UniProtKB-SubCell"/>
</dbReference>
<dbReference type="GO" id="GO:0030145">
    <property type="term" value="F:manganese ion binding"/>
    <property type="evidence" value="ECO:0007669"/>
    <property type="project" value="TreeGrafter"/>
</dbReference>
<dbReference type="GO" id="GO:0004784">
    <property type="term" value="F:superoxide dismutase activity"/>
    <property type="evidence" value="ECO:0007669"/>
    <property type="project" value="UniProtKB-EC"/>
</dbReference>
<dbReference type="FunFam" id="1.10.287.990:FF:000001">
    <property type="entry name" value="Superoxide dismutase"/>
    <property type="match status" value="1"/>
</dbReference>
<dbReference type="Gene3D" id="1.10.287.990">
    <property type="entry name" value="Fe,Mn superoxide dismutase (SOD) domain"/>
    <property type="match status" value="1"/>
</dbReference>
<dbReference type="Gene3D" id="3.55.40.20">
    <property type="entry name" value="Iron/manganese superoxide dismutase, C-terminal domain"/>
    <property type="match status" value="1"/>
</dbReference>
<dbReference type="InterPro" id="IPR050265">
    <property type="entry name" value="Fe/Mn_Superoxide_Dismutase"/>
</dbReference>
<dbReference type="InterPro" id="IPR001189">
    <property type="entry name" value="Mn/Fe_SOD"/>
</dbReference>
<dbReference type="InterPro" id="IPR019832">
    <property type="entry name" value="Mn/Fe_SOD_C"/>
</dbReference>
<dbReference type="InterPro" id="IPR019831">
    <property type="entry name" value="Mn/Fe_SOD_N"/>
</dbReference>
<dbReference type="InterPro" id="IPR036324">
    <property type="entry name" value="Mn/Fe_SOD_N_sf"/>
</dbReference>
<dbReference type="InterPro" id="IPR036314">
    <property type="entry name" value="SOD_C_sf"/>
</dbReference>
<dbReference type="PANTHER" id="PTHR11404">
    <property type="entry name" value="SUPEROXIDE DISMUTASE 2"/>
    <property type="match status" value="1"/>
</dbReference>
<dbReference type="PANTHER" id="PTHR11404:SF6">
    <property type="entry name" value="SUPEROXIDE DISMUTASE [MN], MITOCHONDRIAL"/>
    <property type="match status" value="1"/>
</dbReference>
<dbReference type="Pfam" id="PF02777">
    <property type="entry name" value="Sod_Fe_C"/>
    <property type="match status" value="1"/>
</dbReference>
<dbReference type="Pfam" id="PF00081">
    <property type="entry name" value="Sod_Fe_N"/>
    <property type="match status" value="1"/>
</dbReference>
<dbReference type="PRINTS" id="PR01703">
    <property type="entry name" value="MNSODISMTASE"/>
</dbReference>
<dbReference type="SUPFAM" id="SSF54719">
    <property type="entry name" value="Fe,Mn superoxide dismutase (SOD), C-terminal domain"/>
    <property type="match status" value="1"/>
</dbReference>
<dbReference type="SUPFAM" id="SSF46609">
    <property type="entry name" value="Fe,Mn superoxide dismutase (SOD), N-terminal domain"/>
    <property type="match status" value="1"/>
</dbReference>
<feature type="chain" id="PRO_0000159962" description="Superoxide dismutase [Mn], mitochondrial">
    <location>
        <begin position="1" status="less than"/>
        <end position="144" status="greater than"/>
    </location>
</feature>
<feature type="binding site" evidence="1">
    <location>
        <position position="10"/>
    </location>
    <ligand>
        <name>Mn(2+)</name>
        <dbReference type="ChEBI" id="CHEBI:29035"/>
    </ligand>
</feature>
<feature type="binding site" evidence="1">
    <location>
        <position position="58"/>
    </location>
    <ligand>
        <name>Mn(2+)</name>
        <dbReference type="ChEBI" id="CHEBI:29035"/>
    </ligand>
</feature>
<feature type="binding site" evidence="1">
    <location>
        <position position="143"/>
    </location>
    <ligand>
        <name>Mn(2+)</name>
        <dbReference type="ChEBI" id="CHEBI:29035"/>
    </ligand>
</feature>
<feature type="non-terminal residue">
    <location>
        <position position="1"/>
    </location>
</feature>
<feature type="non-terminal residue">
    <location>
        <position position="144"/>
    </location>
</feature>
<accession>P28767</accession>
<keyword id="KW-0464">Manganese</keyword>
<keyword id="KW-0479">Metal-binding</keyword>
<keyword id="KW-0496">Mitochondrion</keyword>
<keyword id="KW-0560">Oxidoreductase</keyword>
<comment type="function">
    <text>Destroys superoxide anion radicals which are normally produced within the cells and which are toxic to biological systems.</text>
</comment>
<comment type="catalytic activity">
    <reaction>
        <text>2 superoxide + 2 H(+) = H2O2 + O2</text>
        <dbReference type="Rhea" id="RHEA:20696"/>
        <dbReference type="ChEBI" id="CHEBI:15378"/>
        <dbReference type="ChEBI" id="CHEBI:15379"/>
        <dbReference type="ChEBI" id="CHEBI:16240"/>
        <dbReference type="ChEBI" id="CHEBI:18421"/>
        <dbReference type="EC" id="1.15.1.1"/>
    </reaction>
</comment>
<comment type="cofactor">
    <cofactor evidence="1">
        <name>Mn(2+)</name>
        <dbReference type="ChEBI" id="CHEBI:29035"/>
    </cofactor>
    <text evidence="1">Binds 1 Mn(2+) ion per subunit.</text>
</comment>
<comment type="subunit">
    <text>Homotetramer.</text>
</comment>
<comment type="subcellular location">
    <subcellularLocation>
        <location>Mitochondrion matrix</location>
    </subcellularLocation>
</comment>
<comment type="similarity">
    <text evidence="2">Belongs to the iron/manganese superoxide dismutase family.</text>
</comment>